<protein>
    <recommendedName>
        <fullName>Uncharacterized protein TC_0300</fullName>
    </recommendedName>
</protein>
<dbReference type="EMBL" id="AE002160">
    <property type="protein sequence ID" value="AAF39165.1"/>
    <property type="molecule type" value="Genomic_DNA"/>
</dbReference>
<dbReference type="PIR" id="G81718">
    <property type="entry name" value="G81718"/>
</dbReference>
<dbReference type="RefSeq" id="WP_010230088.1">
    <property type="nucleotide sequence ID" value="NZ_CP063055.1"/>
</dbReference>
<dbReference type="SMR" id="Q9PL08"/>
<dbReference type="GeneID" id="1246470"/>
<dbReference type="KEGG" id="cmu:TC_0300"/>
<dbReference type="HOGENOM" id="CLU_180607_0_0_0"/>
<dbReference type="OrthoDB" id="18977at2"/>
<dbReference type="Proteomes" id="UP000000800">
    <property type="component" value="Chromosome"/>
</dbReference>
<proteinExistence type="inferred from homology"/>
<accession>Q9PL08</accession>
<sequence length="100" mass="11545">MARKERLTNEKLNKLFDSPFSLVNYVIKQTKNRIARGDVRSSNVAIEALNFLDLYGIQSECLERDDREQYASGAGEKRKEQSSGNSRRKDPSLYNWSDVK</sequence>
<name>Y300_CHLMU</name>
<feature type="chain" id="PRO_0000218357" description="Uncharacterized protein TC_0300">
    <location>
        <begin position="1"/>
        <end position="100"/>
    </location>
</feature>
<feature type="region of interest" description="Disordered" evidence="1">
    <location>
        <begin position="68"/>
        <end position="100"/>
    </location>
</feature>
<feature type="compositionally biased region" description="Basic and acidic residues" evidence="1">
    <location>
        <begin position="68"/>
        <end position="91"/>
    </location>
</feature>
<gene>
    <name type="ordered locus">TC_0300</name>
</gene>
<reference key="1">
    <citation type="journal article" date="2000" name="Nucleic Acids Res.">
        <title>Genome sequences of Chlamydia trachomatis MoPn and Chlamydia pneumoniae AR39.</title>
        <authorList>
            <person name="Read T.D."/>
            <person name="Brunham R.C."/>
            <person name="Shen C."/>
            <person name="Gill S.R."/>
            <person name="Heidelberg J.F."/>
            <person name="White O."/>
            <person name="Hickey E.K."/>
            <person name="Peterson J.D."/>
            <person name="Utterback T.R."/>
            <person name="Berry K.J."/>
            <person name="Bass S."/>
            <person name="Linher K.D."/>
            <person name="Weidman J.F."/>
            <person name="Khouri H.M."/>
            <person name="Craven B."/>
            <person name="Bowman C."/>
            <person name="Dodson R.J."/>
            <person name="Gwinn M.L."/>
            <person name="Nelson W.C."/>
            <person name="DeBoy R.T."/>
            <person name="Kolonay J.F."/>
            <person name="McClarty G."/>
            <person name="Salzberg S.L."/>
            <person name="Eisen J.A."/>
            <person name="Fraser C.M."/>
        </authorList>
    </citation>
    <scope>NUCLEOTIDE SEQUENCE [LARGE SCALE GENOMIC DNA]</scope>
    <source>
        <strain>MoPn / Nigg</strain>
    </source>
</reference>
<evidence type="ECO:0000256" key="1">
    <source>
        <dbReference type="SAM" id="MobiDB-lite"/>
    </source>
</evidence>
<evidence type="ECO:0000305" key="2"/>
<comment type="similarity">
    <text evidence="2">Belongs to the chlamydial CPn_0121/CT_031/TC_0300 family.</text>
</comment>
<organism>
    <name type="scientific">Chlamydia muridarum (strain MoPn / Nigg)</name>
    <dbReference type="NCBI Taxonomy" id="243161"/>
    <lineage>
        <taxon>Bacteria</taxon>
        <taxon>Pseudomonadati</taxon>
        <taxon>Chlamydiota</taxon>
        <taxon>Chlamydiia</taxon>
        <taxon>Chlamydiales</taxon>
        <taxon>Chlamydiaceae</taxon>
        <taxon>Chlamydia/Chlamydophila group</taxon>
        <taxon>Chlamydia</taxon>
    </lineage>
</organism>